<keyword id="KW-0479">Metal-binding</keyword>
<keyword id="KW-1185">Reference proteome</keyword>
<keyword id="KW-0687">Ribonucleoprotein</keyword>
<keyword id="KW-0689">Ribosomal protein</keyword>
<keyword id="KW-0694">RNA-binding</keyword>
<keyword id="KW-0699">rRNA-binding</keyword>
<keyword id="KW-0862">Zinc</keyword>
<feature type="chain" id="PRO_0000269083" description="Small ribosomal subunit protein uS14C">
    <location>
        <begin position="1"/>
        <end position="61"/>
    </location>
</feature>
<feature type="binding site" evidence="1">
    <location>
        <position position="24"/>
    </location>
    <ligand>
        <name>Zn(2+)</name>
        <dbReference type="ChEBI" id="CHEBI:29105"/>
    </ligand>
</feature>
<feature type="binding site" evidence="1">
    <location>
        <position position="27"/>
    </location>
    <ligand>
        <name>Zn(2+)</name>
        <dbReference type="ChEBI" id="CHEBI:29105"/>
    </ligand>
</feature>
<feature type="binding site" evidence="1">
    <location>
        <position position="40"/>
    </location>
    <ligand>
        <name>Zn(2+)</name>
        <dbReference type="ChEBI" id="CHEBI:29105"/>
    </ligand>
</feature>
<feature type="binding site" evidence="1">
    <location>
        <position position="43"/>
    </location>
    <ligand>
        <name>Zn(2+)</name>
        <dbReference type="ChEBI" id="CHEBI:29105"/>
    </ligand>
</feature>
<dbReference type="EMBL" id="AE017333">
    <property type="protein sequence ID" value="AAU41120.1"/>
    <property type="molecule type" value="Genomic_DNA"/>
</dbReference>
<dbReference type="EMBL" id="CP000002">
    <property type="protein sequence ID" value="AAU23762.1"/>
    <property type="molecule type" value="Genomic_DNA"/>
</dbReference>
<dbReference type="RefSeq" id="WP_003182651.1">
    <property type="nucleotide sequence ID" value="NC_006322.1"/>
</dbReference>
<dbReference type="SMR" id="Q65IJ4"/>
<dbReference type="STRING" id="279010.BL05211"/>
<dbReference type="KEGG" id="bld:BLi02239"/>
<dbReference type="KEGG" id="bli:BL05211"/>
<dbReference type="eggNOG" id="COG0199">
    <property type="taxonomic scope" value="Bacteria"/>
</dbReference>
<dbReference type="HOGENOM" id="CLU_139869_3_0_9"/>
<dbReference type="Proteomes" id="UP000000606">
    <property type="component" value="Chromosome"/>
</dbReference>
<dbReference type="GO" id="GO:0015935">
    <property type="term" value="C:small ribosomal subunit"/>
    <property type="evidence" value="ECO:0007669"/>
    <property type="project" value="TreeGrafter"/>
</dbReference>
<dbReference type="GO" id="GO:0019843">
    <property type="term" value="F:rRNA binding"/>
    <property type="evidence" value="ECO:0007669"/>
    <property type="project" value="UniProtKB-UniRule"/>
</dbReference>
<dbReference type="GO" id="GO:0003735">
    <property type="term" value="F:structural constituent of ribosome"/>
    <property type="evidence" value="ECO:0007669"/>
    <property type="project" value="InterPro"/>
</dbReference>
<dbReference type="GO" id="GO:0008270">
    <property type="term" value="F:zinc ion binding"/>
    <property type="evidence" value="ECO:0007669"/>
    <property type="project" value="UniProtKB-UniRule"/>
</dbReference>
<dbReference type="GO" id="GO:0006412">
    <property type="term" value="P:translation"/>
    <property type="evidence" value="ECO:0007669"/>
    <property type="project" value="UniProtKB-UniRule"/>
</dbReference>
<dbReference type="FunFam" id="4.10.830.10:FF:000001">
    <property type="entry name" value="30S ribosomal protein S14 type Z"/>
    <property type="match status" value="1"/>
</dbReference>
<dbReference type="Gene3D" id="4.10.830.10">
    <property type="entry name" value="30s Ribosomal Protein S14, Chain N"/>
    <property type="match status" value="1"/>
</dbReference>
<dbReference type="HAMAP" id="MF_01364_B">
    <property type="entry name" value="Ribosomal_uS14_2_B"/>
    <property type="match status" value="1"/>
</dbReference>
<dbReference type="InterPro" id="IPR001209">
    <property type="entry name" value="Ribosomal_uS14"/>
</dbReference>
<dbReference type="InterPro" id="IPR023053">
    <property type="entry name" value="Ribosomal_uS14_bact"/>
</dbReference>
<dbReference type="InterPro" id="IPR018271">
    <property type="entry name" value="Ribosomal_uS14_CS"/>
</dbReference>
<dbReference type="InterPro" id="IPR043140">
    <property type="entry name" value="Ribosomal_uS14_sf"/>
</dbReference>
<dbReference type="NCBIfam" id="NF005974">
    <property type="entry name" value="PRK08061.1"/>
    <property type="match status" value="1"/>
</dbReference>
<dbReference type="PANTHER" id="PTHR19836">
    <property type="entry name" value="30S RIBOSOMAL PROTEIN S14"/>
    <property type="match status" value="1"/>
</dbReference>
<dbReference type="PANTHER" id="PTHR19836:SF26">
    <property type="entry name" value="SMALL RIBOSOMAL SUBUNIT PROTEIN US14B"/>
    <property type="match status" value="1"/>
</dbReference>
<dbReference type="Pfam" id="PF00253">
    <property type="entry name" value="Ribosomal_S14"/>
    <property type="match status" value="1"/>
</dbReference>
<dbReference type="SUPFAM" id="SSF57716">
    <property type="entry name" value="Glucocorticoid receptor-like (DNA-binding domain)"/>
    <property type="match status" value="1"/>
</dbReference>
<dbReference type="PROSITE" id="PS00527">
    <property type="entry name" value="RIBOSOMAL_S14"/>
    <property type="match status" value="1"/>
</dbReference>
<comment type="function">
    <text evidence="1">Binds 16S rRNA, required for the assembly of 30S particles and may also be responsible for determining the conformation of the 16S rRNA at the A site.</text>
</comment>
<comment type="cofactor">
    <cofactor evidence="1">
        <name>Zn(2+)</name>
        <dbReference type="ChEBI" id="CHEBI:29105"/>
    </cofactor>
    <text evidence="1">Binds 1 zinc ion per subunit.</text>
</comment>
<comment type="subunit">
    <text evidence="1">Part of the 30S ribosomal subunit. Contacts proteins S3 and S10.</text>
</comment>
<comment type="similarity">
    <text evidence="1">Belongs to the universal ribosomal protein uS14 family. Zinc-binding uS14 subfamily.</text>
</comment>
<protein>
    <recommendedName>
        <fullName evidence="1">Small ribosomal subunit protein uS14C</fullName>
    </recommendedName>
    <alternativeName>
        <fullName evidence="2">30S ribosomal protein S14 type Z 2</fullName>
    </alternativeName>
</protein>
<accession>Q65IJ4</accession>
<accession>Q62TZ7</accession>
<name>R14Z2_BACLD</name>
<gene>
    <name evidence="1" type="primary">rpsZ2</name>
    <name evidence="1" type="synonym">rpsN2</name>
    <name evidence="1" type="synonym">rpsNAB</name>
    <name type="ordered locus">BLi02239</name>
    <name type="ordered locus">BL05211</name>
</gene>
<reference key="1">
    <citation type="journal article" date="2004" name="J. Mol. Microbiol. Biotechnol.">
        <title>The complete genome sequence of Bacillus licheniformis DSM13, an organism with great industrial potential.</title>
        <authorList>
            <person name="Veith B."/>
            <person name="Herzberg C."/>
            <person name="Steckel S."/>
            <person name="Feesche J."/>
            <person name="Maurer K.H."/>
            <person name="Ehrenreich P."/>
            <person name="Baeumer S."/>
            <person name="Henne A."/>
            <person name="Liesegang H."/>
            <person name="Merkl R."/>
            <person name="Ehrenreich A."/>
            <person name="Gottschalk G."/>
        </authorList>
    </citation>
    <scope>NUCLEOTIDE SEQUENCE [LARGE SCALE GENOMIC DNA]</scope>
    <source>
        <strain>ATCC 14580 / DSM 13 / JCM 2505 / CCUG 7422 / NBRC 12200 / NCIMB 9375 / NCTC 10341 / NRRL NRS-1264 / Gibson 46</strain>
    </source>
</reference>
<reference key="2">
    <citation type="journal article" date="2004" name="Genome Biol.">
        <title>Complete genome sequence of the industrial bacterium Bacillus licheniformis and comparisons with closely related Bacillus species.</title>
        <authorList>
            <person name="Rey M.W."/>
            <person name="Ramaiya P."/>
            <person name="Nelson B.A."/>
            <person name="Brody-Karpin S.D."/>
            <person name="Zaretsky E.J."/>
            <person name="Tang M."/>
            <person name="Lopez de Leon A."/>
            <person name="Xiang H."/>
            <person name="Gusti V."/>
            <person name="Clausen I.G."/>
            <person name="Olsen P.B."/>
            <person name="Rasmussen M.D."/>
            <person name="Andersen J.T."/>
            <person name="Joergensen P.L."/>
            <person name="Larsen T.S."/>
            <person name="Sorokin A."/>
            <person name="Bolotin A."/>
            <person name="Lapidus A."/>
            <person name="Galleron N."/>
            <person name="Ehrlich S.D."/>
            <person name="Berka R.M."/>
        </authorList>
    </citation>
    <scope>NUCLEOTIDE SEQUENCE [LARGE SCALE GENOMIC DNA]</scope>
    <source>
        <strain>ATCC 14580 / DSM 13 / JCM 2505 / CCUG 7422 / NBRC 12200 / NCIMB 9375 / NCTC 10341 / NRRL NRS-1264 / Gibson 46</strain>
    </source>
</reference>
<sequence>MAKTSMIVKQKREQKFKVREYTRCERCGRPHSVIRKFKLCRICFRELAYKGHIPGVKKASW</sequence>
<organism>
    <name type="scientific">Bacillus licheniformis (strain ATCC 14580 / DSM 13 / JCM 2505 / CCUG 7422 / NBRC 12200 / NCIMB 9375 / NCTC 10341 / NRRL NRS-1264 / Gibson 46)</name>
    <dbReference type="NCBI Taxonomy" id="279010"/>
    <lineage>
        <taxon>Bacteria</taxon>
        <taxon>Bacillati</taxon>
        <taxon>Bacillota</taxon>
        <taxon>Bacilli</taxon>
        <taxon>Bacillales</taxon>
        <taxon>Bacillaceae</taxon>
        <taxon>Bacillus</taxon>
    </lineage>
</organism>
<proteinExistence type="inferred from homology"/>
<evidence type="ECO:0000255" key="1">
    <source>
        <dbReference type="HAMAP-Rule" id="MF_01364"/>
    </source>
</evidence>
<evidence type="ECO:0000305" key="2"/>